<sequence>MREIVHIQAGQCGNQIGSKFWEVISDEHGIDPLGQYHGDSDLQLERINVYYNEVQKKRYVPRAILVDLEPGTMDSVRAGAFGQLFRPDNYVFGQSGAGNNWAKGHYTEGAELVDSVLDVIRKEAEACDCLQGFQFTHSLGGGTGSGMGTLLISKIREEYPDRIMTTFSVVPSPKVSDTVVEPYNATLSVHQLVENTDETFCIDNEALYDICFRTLKLTTPTYGDLNHLVSATMSGVTTCLRFPGQLNADLRKLAVNMVPFPRLHFFMPGFAPLTSRSNQQYRAVTVAELTQQLFDAKNMMAACDPRHGRYLTAAAIFRGRMSMKDVDEQMLNIQNKNSAYFVDWIPNNVKTAVCDIPPRDLKMAATFIGNSTAIQELFKRVSEQFTAMFRRKAFLHWYTGEGMDEMEFTEAESNMNDLVSEYQQYQDASADDELNETIEQAETE</sequence>
<accession>P41387</accession>
<keyword id="KW-0963">Cytoplasm</keyword>
<keyword id="KW-0206">Cytoskeleton</keyword>
<keyword id="KW-0342">GTP-binding</keyword>
<keyword id="KW-0460">Magnesium</keyword>
<keyword id="KW-0479">Metal-binding</keyword>
<keyword id="KW-0493">Microtubule</keyword>
<keyword id="KW-0547">Nucleotide-binding</keyword>
<organism>
    <name type="scientific">Onchocerca gibsoni</name>
    <dbReference type="NCBI Taxonomy" id="6284"/>
    <lineage>
        <taxon>Eukaryota</taxon>
        <taxon>Metazoa</taxon>
        <taxon>Ecdysozoa</taxon>
        <taxon>Nematoda</taxon>
        <taxon>Chromadorea</taxon>
        <taxon>Rhabditida</taxon>
        <taxon>Spirurina</taxon>
        <taxon>Spiruromorpha</taxon>
        <taxon>Filarioidea</taxon>
        <taxon>Onchocercidae</taxon>
        <taxon>Onchocerca</taxon>
    </lineage>
</organism>
<feature type="chain" id="PRO_0000048305" description="Tubulin beta chain">
    <location>
        <begin position="1"/>
        <end position="444"/>
    </location>
</feature>
<feature type="binding site" evidence="2">
    <location>
        <position position="11"/>
    </location>
    <ligand>
        <name>GTP</name>
        <dbReference type="ChEBI" id="CHEBI:37565"/>
    </ligand>
</feature>
<feature type="binding site" evidence="1">
    <location>
        <position position="69"/>
    </location>
    <ligand>
        <name>GTP</name>
        <dbReference type="ChEBI" id="CHEBI:37565"/>
    </ligand>
</feature>
<feature type="binding site" evidence="1">
    <location>
        <position position="69"/>
    </location>
    <ligand>
        <name>Mg(2+)</name>
        <dbReference type="ChEBI" id="CHEBI:18420"/>
    </ligand>
</feature>
<feature type="binding site" evidence="2">
    <location>
        <position position="138"/>
    </location>
    <ligand>
        <name>GTP</name>
        <dbReference type="ChEBI" id="CHEBI:37565"/>
    </ligand>
</feature>
<feature type="binding site" evidence="2">
    <location>
        <position position="142"/>
    </location>
    <ligand>
        <name>GTP</name>
        <dbReference type="ChEBI" id="CHEBI:37565"/>
    </ligand>
</feature>
<feature type="binding site" evidence="2">
    <location>
        <position position="143"/>
    </location>
    <ligand>
        <name>GTP</name>
        <dbReference type="ChEBI" id="CHEBI:37565"/>
    </ligand>
</feature>
<feature type="binding site" evidence="2">
    <location>
        <position position="144"/>
    </location>
    <ligand>
        <name>GTP</name>
        <dbReference type="ChEBI" id="CHEBI:37565"/>
    </ligand>
</feature>
<feature type="binding site" evidence="2">
    <location>
        <position position="204"/>
    </location>
    <ligand>
        <name>GTP</name>
        <dbReference type="ChEBI" id="CHEBI:37565"/>
    </ligand>
</feature>
<feature type="binding site" evidence="2">
    <location>
        <position position="226"/>
    </location>
    <ligand>
        <name>GTP</name>
        <dbReference type="ChEBI" id="CHEBI:37565"/>
    </ligand>
</feature>
<name>TBB_ONCGI</name>
<evidence type="ECO:0000250" key="1">
    <source>
        <dbReference type="UniProtKB" id="P68363"/>
    </source>
</evidence>
<evidence type="ECO:0000250" key="2">
    <source>
        <dbReference type="UniProtKB" id="Q13509"/>
    </source>
</evidence>
<evidence type="ECO:0000305" key="3"/>
<gene>
    <name type="primary">TBB</name>
</gene>
<reference key="1">
    <citation type="journal article" date="1995" name="Braz. J. Med. Biol. Res.">
        <title>Organization and structure of an Onchocerca beta-tubulin gene.</title>
        <authorList>
            <person name="Margutti-Pinto M.E.B."/>
            <person name="Khan A."/>
            <person name="Scaife J.A."/>
            <person name="Fothergill-Gilmore L.A."/>
        </authorList>
    </citation>
    <scope>NUCLEOTIDE SEQUENCE [GENOMIC DNA]</scope>
</reference>
<dbReference type="EMBL" id="X79930">
    <property type="protein sequence ID" value="CAA56285.1"/>
    <property type="molecule type" value="Genomic_DNA"/>
</dbReference>
<dbReference type="SMR" id="P41387"/>
<dbReference type="GO" id="GO:0005737">
    <property type="term" value="C:cytoplasm"/>
    <property type="evidence" value="ECO:0007669"/>
    <property type="project" value="UniProtKB-KW"/>
</dbReference>
<dbReference type="GO" id="GO:0005874">
    <property type="term" value="C:microtubule"/>
    <property type="evidence" value="ECO:0007669"/>
    <property type="project" value="UniProtKB-KW"/>
</dbReference>
<dbReference type="GO" id="GO:0005525">
    <property type="term" value="F:GTP binding"/>
    <property type="evidence" value="ECO:0007669"/>
    <property type="project" value="UniProtKB-KW"/>
</dbReference>
<dbReference type="GO" id="GO:0003924">
    <property type="term" value="F:GTPase activity"/>
    <property type="evidence" value="ECO:0007669"/>
    <property type="project" value="InterPro"/>
</dbReference>
<dbReference type="GO" id="GO:0046872">
    <property type="term" value="F:metal ion binding"/>
    <property type="evidence" value="ECO:0007669"/>
    <property type="project" value="UniProtKB-KW"/>
</dbReference>
<dbReference type="GO" id="GO:0005200">
    <property type="term" value="F:structural constituent of cytoskeleton"/>
    <property type="evidence" value="ECO:0007669"/>
    <property type="project" value="InterPro"/>
</dbReference>
<dbReference type="GO" id="GO:0007017">
    <property type="term" value="P:microtubule-based process"/>
    <property type="evidence" value="ECO:0007669"/>
    <property type="project" value="InterPro"/>
</dbReference>
<dbReference type="CDD" id="cd02187">
    <property type="entry name" value="beta_tubulin"/>
    <property type="match status" value="1"/>
</dbReference>
<dbReference type="FunFam" id="1.10.287.600:FF:000002">
    <property type="entry name" value="Tubulin beta chain"/>
    <property type="match status" value="1"/>
</dbReference>
<dbReference type="FunFam" id="3.30.1330.20:FF:000002">
    <property type="entry name" value="Tubulin beta chain"/>
    <property type="match status" value="1"/>
</dbReference>
<dbReference type="FunFam" id="3.40.50.1440:FF:000003">
    <property type="entry name" value="Tubulin beta chain"/>
    <property type="match status" value="1"/>
</dbReference>
<dbReference type="Gene3D" id="1.10.287.600">
    <property type="entry name" value="Helix hairpin bin"/>
    <property type="match status" value="1"/>
</dbReference>
<dbReference type="Gene3D" id="3.30.1330.20">
    <property type="entry name" value="Tubulin/FtsZ, C-terminal domain"/>
    <property type="match status" value="1"/>
</dbReference>
<dbReference type="Gene3D" id="3.40.50.1440">
    <property type="entry name" value="Tubulin/FtsZ, GTPase domain"/>
    <property type="match status" value="1"/>
</dbReference>
<dbReference type="InterPro" id="IPR013838">
    <property type="entry name" value="Beta-tubulin_BS"/>
</dbReference>
<dbReference type="InterPro" id="IPR002453">
    <property type="entry name" value="Beta_tubulin"/>
</dbReference>
<dbReference type="InterPro" id="IPR008280">
    <property type="entry name" value="Tub_FtsZ_C"/>
</dbReference>
<dbReference type="InterPro" id="IPR000217">
    <property type="entry name" value="Tubulin"/>
</dbReference>
<dbReference type="InterPro" id="IPR037103">
    <property type="entry name" value="Tubulin/FtsZ-like_C"/>
</dbReference>
<dbReference type="InterPro" id="IPR018316">
    <property type="entry name" value="Tubulin/FtsZ_2-layer-sand-dom"/>
</dbReference>
<dbReference type="InterPro" id="IPR036525">
    <property type="entry name" value="Tubulin/FtsZ_GTPase_sf"/>
</dbReference>
<dbReference type="InterPro" id="IPR023123">
    <property type="entry name" value="Tubulin_C"/>
</dbReference>
<dbReference type="InterPro" id="IPR017975">
    <property type="entry name" value="Tubulin_CS"/>
</dbReference>
<dbReference type="InterPro" id="IPR003008">
    <property type="entry name" value="Tubulin_FtsZ_GTPase"/>
</dbReference>
<dbReference type="PANTHER" id="PTHR11588">
    <property type="entry name" value="TUBULIN"/>
    <property type="match status" value="1"/>
</dbReference>
<dbReference type="Pfam" id="PF00091">
    <property type="entry name" value="Tubulin"/>
    <property type="match status" value="1"/>
</dbReference>
<dbReference type="Pfam" id="PF03953">
    <property type="entry name" value="Tubulin_C"/>
    <property type="match status" value="1"/>
</dbReference>
<dbReference type="PRINTS" id="PR01163">
    <property type="entry name" value="BETATUBULIN"/>
</dbReference>
<dbReference type="PRINTS" id="PR01161">
    <property type="entry name" value="TUBULIN"/>
</dbReference>
<dbReference type="SMART" id="SM00864">
    <property type="entry name" value="Tubulin"/>
    <property type="match status" value="1"/>
</dbReference>
<dbReference type="SMART" id="SM00865">
    <property type="entry name" value="Tubulin_C"/>
    <property type="match status" value="1"/>
</dbReference>
<dbReference type="SUPFAM" id="SSF55307">
    <property type="entry name" value="Tubulin C-terminal domain-like"/>
    <property type="match status" value="1"/>
</dbReference>
<dbReference type="SUPFAM" id="SSF52490">
    <property type="entry name" value="Tubulin nucleotide-binding domain-like"/>
    <property type="match status" value="1"/>
</dbReference>
<dbReference type="PROSITE" id="PS00227">
    <property type="entry name" value="TUBULIN"/>
    <property type="match status" value="1"/>
</dbReference>
<dbReference type="PROSITE" id="PS00228">
    <property type="entry name" value="TUBULIN_B_AUTOREG"/>
    <property type="match status" value="1"/>
</dbReference>
<protein>
    <recommendedName>
        <fullName>Tubulin beta chain</fullName>
    </recommendedName>
    <alternativeName>
        <fullName>Beta-tubulin</fullName>
    </alternativeName>
</protein>
<proteinExistence type="inferred from homology"/>
<comment type="function">
    <text>Tubulin is the major constituent of microtubules, a cylinder consisting of laterally associated linear protofilaments composed of alpha- and beta-tubulin heterodimers. Microtubules grow by the addition of GTP-tubulin dimers to the microtubule end, where a stabilizing cap forms. Below the cap, tubulin dimers are in GDP-bound state, owing to GTPase activity of alpha-tubulin.</text>
</comment>
<comment type="cofactor">
    <cofactor evidence="1">
        <name>Mg(2+)</name>
        <dbReference type="ChEBI" id="CHEBI:18420"/>
    </cofactor>
</comment>
<comment type="subunit">
    <text>Dimer of alpha and beta chains. A typical microtubule is a hollow water-filled tube with an outer diameter of 25 nm and an inner diameter of 15 nM. Alpha-beta heterodimers associate head-to-tail to form protofilaments running lengthwise along the microtubule wall with the beta-tubulin subunit facing the microtubule plus end conferring a structural polarity. Microtubules usually have 13 protofilaments but different protofilament numbers can be found in some organisms and specialized cells.</text>
</comment>
<comment type="subcellular location">
    <subcellularLocation>
        <location>Cytoplasm</location>
        <location>Cytoskeleton</location>
    </subcellularLocation>
</comment>
<comment type="similarity">
    <text evidence="3">Belongs to the tubulin family.</text>
</comment>